<proteinExistence type="inferred from homology"/>
<accession>Q87AZ9</accession>
<organism>
    <name type="scientific">Xylella fastidiosa (strain Temecula1 / ATCC 700964)</name>
    <dbReference type="NCBI Taxonomy" id="183190"/>
    <lineage>
        <taxon>Bacteria</taxon>
        <taxon>Pseudomonadati</taxon>
        <taxon>Pseudomonadota</taxon>
        <taxon>Gammaproteobacteria</taxon>
        <taxon>Lysobacterales</taxon>
        <taxon>Lysobacteraceae</taxon>
        <taxon>Xylella</taxon>
    </lineage>
</organism>
<dbReference type="EMBL" id="AE009442">
    <property type="protein sequence ID" value="AAO29501.1"/>
    <property type="molecule type" value="Genomic_DNA"/>
</dbReference>
<dbReference type="RefSeq" id="WP_004089847.1">
    <property type="nucleotide sequence ID" value="NC_004556.1"/>
</dbReference>
<dbReference type="SMR" id="Q87AZ9"/>
<dbReference type="KEGG" id="xft:PD_1661"/>
<dbReference type="HOGENOM" id="CLU_020365_1_1_6"/>
<dbReference type="Proteomes" id="UP000002516">
    <property type="component" value="Chromosome"/>
</dbReference>
<dbReference type="GO" id="GO:0006310">
    <property type="term" value="P:DNA recombination"/>
    <property type="evidence" value="ECO:0007669"/>
    <property type="project" value="UniProtKB-KW"/>
</dbReference>
<dbReference type="InterPro" id="IPR003798">
    <property type="entry name" value="DNA_recombination_RmuC"/>
</dbReference>
<dbReference type="PANTHER" id="PTHR30563">
    <property type="entry name" value="DNA RECOMBINATION PROTEIN RMUC"/>
    <property type="match status" value="1"/>
</dbReference>
<dbReference type="PANTHER" id="PTHR30563:SF0">
    <property type="entry name" value="DNA RECOMBINATION PROTEIN RMUC"/>
    <property type="match status" value="1"/>
</dbReference>
<dbReference type="Pfam" id="PF02646">
    <property type="entry name" value="RmuC"/>
    <property type="match status" value="1"/>
</dbReference>
<dbReference type="SUPFAM" id="SSF58113">
    <property type="entry name" value="Apolipoprotein A-I"/>
    <property type="match status" value="1"/>
</dbReference>
<sequence>MQPDFLILGCLLCIVLVLQILALLRRSDHTALDHVLREEHRVGRAELREQLETLERQQEVRLASFARSLTDLVARIDQRLDQLTASLGEDARKGRQEASEGQQRFADALGQRLTELTQRNAQSINEMRTTLEQQLHVLRADNAQQLEQIRTIVDEKLQTTLNTRLDSSFKLVSERLEQVQRGLGEMQQLATGVGDLKRVLTHVKSRGTWGEVQLDNILDQTLTQEQYARGVRVCPDASEIVDFAVRLPGRGQYEAPVWLPIDVKCPKEDYERLLDAQEQADQELVRTMGVQLERAIKIQAKSIRDKYIVPPHTTDFAVMFLPTEGLYAETIRRPGLADVLQREYRVVVAGPTTVTALLNSLQMGFRTLAIEQRSSEVWSLLGAVKSEFGKFAGILEKAEKQINTVGKSLGEAGRKTRTIERRLRGVESLSQEQTQVLLDGLDVDTAESDVDSDASF</sequence>
<comment type="function">
    <text evidence="1">Involved in DNA recombination.</text>
</comment>
<comment type="similarity">
    <text evidence="3">Belongs to the RmuC family.</text>
</comment>
<keyword id="KW-0175">Coiled coil</keyword>
<keyword id="KW-0233">DNA recombination</keyword>
<keyword id="KW-1185">Reference proteome</keyword>
<evidence type="ECO:0000250" key="1"/>
<evidence type="ECO:0000255" key="2"/>
<evidence type="ECO:0000305" key="3"/>
<reference key="1">
    <citation type="journal article" date="2003" name="J. Bacteriol.">
        <title>Comparative analyses of the complete genome sequences of Pierce's disease and citrus variegated chlorosis strains of Xylella fastidiosa.</title>
        <authorList>
            <person name="Van Sluys M.A."/>
            <person name="de Oliveira M.C."/>
            <person name="Monteiro-Vitorello C.B."/>
            <person name="Miyaki C.Y."/>
            <person name="Furlan L.R."/>
            <person name="Camargo L.E.A."/>
            <person name="da Silva A.C.R."/>
            <person name="Moon D.H."/>
            <person name="Takita M.A."/>
            <person name="Lemos E.G.M."/>
            <person name="Machado M.A."/>
            <person name="Ferro M.I.T."/>
            <person name="da Silva F.R."/>
            <person name="Goldman M.H.S."/>
            <person name="Goldman G.H."/>
            <person name="Lemos M.V.F."/>
            <person name="El-Dorry H."/>
            <person name="Tsai S.M."/>
            <person name="Carrer H."/>
            <person name="Carraro D.M."/>
            <person name="de Oliveira R.C."/>
            <person name="Nunes L.R."/>
            <person name="Siqueira W.J."/>
            <person name="Coutinho L.L."/>
            <person name="Kimura E.T."/>
            <person name="Ferro E.S."/>
            <person name="Harakava R."/>
            <person name="Kuramae E.E."/>
            <person name="Marino C.L."/>
            <person name="Giglioti E."/>
            <person name="Abreu I.L."/>
            <person name="Alves L.M.C."/>
            <person name="do Amaral A.M."/>
            <person name="Baia G.S."/>
            <person name="Blanco S.R."/>
            <person name="Brito M.S."/>
            <person name="Cannavan F.S."/>
            <person name="Celestino A.V."/>
            <person name="da Cunha A.F."/>
            <person name="Fenille R.C."/>
            <person name="Ferro J.A."/>
            <person name="Formighieri E.F."/>
            <person name="Kishi L.T."/>
            <person name="Leoni S.G."/>
            <person name="Oliveira A.R."/>
            <person name="Rosa V.E. Jr."/>
            <person name="Sassaki F.T."/>
            <person name="Sena J.A.D."/>
            <person name="de Souza A.A."/>
            <person name="Truffi D."/>
            <person name="Tsukumo F."/>
            <person name="Yanai G.M."/>
            <person name="Zaros L.G."/>
            <person name="Civerolo E.L."/>
            <person name="Simpson A.J.G."/>
            <person name="Almeida N.F. Jr."/>
            <person name="Setubal J.C."/>
            <person name="Kitajima J.P."/>
        </authorList>
    </citation>
    <scope>NUCLEOTIDE SEQUENCE [LARGE SCALE GENOMIC DNA]</scope>
    <source>
        <strain>Temecula1 / ATCC 700964</strain>
    </source>
</reference>
<gene>
    <name type="primary">rmuC</name>
    <name type="ordered locus">PD_1661</name>
</gene>
<protein>
    <recommendedName>
        <fullName>DNA recombination protein RmuC homolog</fullName>
    </recommendedName>
</protein>
<feature type="chain" id="PRO_0000202053" description="DNA recombination protein RmuC homolog">
    <location>
        <begin position="1"/>
        <end position="456"/>
    </location>
</feature>
<feature type="coiled-coil region" evidence="2">
    <location>
        <begin position="36"/>
        <end position="60"/>
    </location>
</feature>
<feature type="coiled-coil region" evidence="2">
    <location>
        <begin position="106"/>
        <end position="158"/>
    </location>
</feature>
<name>RMUC_XYLFT</name>